<protein>
    <recommendedName>
        <fullName>Proteolipid protein 2</fullName>
    </recommendedName>
</protein>
<name>PLP2_RAT</name>
<proteinExistence type="evidence at transcript level"/>
<reference key="1">
    <citation type="journal article" date="2004" name="Genome Res.">
        <title>The status, quality, and expansion of the NIH full-length cDNA project: the Mammalian Gene Collection (MGC).</title>
        <authorList>
            <consortium name="The MGC Project Team"/>
        </authorList>
    </citation>
    <scope>NUCLEOTIDE SEQUENCE [LARGE SCALE MRNA]</scope>
    <source>
        <tissue>Prostate</tissue>
    </source>
</reference>
<organism>
    <name type="scientific">Rattus norvegicus</name>
    <name type="common">Rat</name>
    <dbReference type="NCBI Taxonomy" id="10116"/>
    <lineage>
        <taxon>Eukaryota</taxon>
        <taxon>Metazoa</taxon>
        <taxon>Chordata</taxon>
        <taxon>Craniata</taxon>
        <taxon>Vertebrata</taxon>
        <taxon>Euteleostomi</taxon>
        <taxon>Mammalia</taxon>
        <taxon>Eutheria</taxon>
        <taxon>Euarchontoglires</taxon>
        <taxon>Glires</taxon>
        <taxon>Rodentia</taxon>
        <taxon>Myomorpha</taxon>
        <taxon>Muroidea</taxon>
        <taxon>Muridae</taxon>
        <taxon>Murinae</taxon>
        <taxon>Rattus</taxon>
    </lineage>
</organism>
<feature type="chain" id="PRO_0000156822" description="Proteolipid protein 2">
    <location>
        <begin position="1"/>
        <end position="151"/>
    </location>
</feature>
<feature type="transmembrane region" description="Helical" evidence="2">
    <location>
        <begin position="25"/>
        <end position="45"/>
    </location>
</feature>
<feature type="transmembrane region" description="Helical" evidence="2">
    <location>
        <begin position="48"/>
        <end position="68"/>
    </location>
</feature>
<feature type="transmembrane region" description="Helical" evidence="2">
    <location>
        <begin position="85"/>
        <end position="105"/>
    </location>
</feature>
<feature type="transmembrane region" description="Helical" evidence="2">
    <location>
        <begin position="112"/>
        <end position="132"/>
    </location>
</feature>
<feature type="domain" description="MARVEL" evidence="3">
    <location>
        <begin position="19"/>
        <end position="137"/>
    </location>
</feature>
<evidence type="ECO:0000250" key="1"/>
<evidence type="ECO:0000255" key="2"/>
<evidence type="ECO:0000255" key="3">
    <source>
        <dbReference type="PROSITE-ProRule" id="PRU00581"/>
    </source>
</evidence>
<accession>Q6P742</accession>
<dbReference type="EMBL" id="BC061844">
    <property type="protein sequence ID" value="AAH61844.1"/>
    <property type="molecule type" value="mRNA"/>
</dbReference>
<dbReference type="RefSeq" id="NP_997484.1">
    <property type="nucleotide sequence ID" value="NM_207601.1"/>
</dbReference>
<dbReference type="FunCoup" id="Q6P742">
    <property type="interactions" value="271"/>
</dbReference>
<dbReference type="IntAct" id="Q6P742">
    <property type="interactions" value="1"/>
</dbReference>
<dbReference type="STRING" id="10116.ENSRNOP00000039462"/>
<dbReference type="PhosphoSitePlus" id="Q6P742"/>
<dbReference type="PaxDb" id="10116-ENSRNOP00000039462"/>
<dbReference type="GeneID" id="302562"/>
<dbReference type="KEGG" id="rno:302562"/>
<dbReference type="UCSC" id="RGD:1587363">
    <property type="organism name" value="rat"/>
</dbReference>
<dbReference type="AGR" id="RGD:1587363"/>
<dbReference type="CTD" id="5355"/>
<dbReference type="RGD" id="1587363">
    <property type="gene designation" value="Plp2"/>
</dbReference>
<dbReference type="VEuPathDB" id="HostDB:ENSRNOG00000039496"/>
<dbReference type="eggNOG" id="KOG4788">
    <property type="taxonomic scope" value="Eukaryota"/>
</dbReference>
<dbReference type="HOGENOM" id="CLU_108546_4_0_1"/>
<dbReference type="InParanoid" id="Q6P742"/>
<dbReference type="OrthoDB" id="19562at9989"/>
<dbReference type="PhylomeDB" id="Q6P742"/>
<dbReference type="TreeFam" id="TF317387"/>
<dbReference type="PRO" id="PR:Q6P742"/>
<dbReference type="Proteomes" id="UP000002494">
    <property type="component" value="Chromosome X"/>
</dbReference>
<dbReference type="Bgee" id="ENSRNOG00000039496">
    <property type="expression patterns" value="Expressed in lung and 19 other cell types or tissues"/>
</dbReference>
<dbReference type="GO" id="GO:0016020">
    <property type="term" value="C:membrane"/>
    <property type="evidence" value="ECO:0000318"/>
    <property type="project" value="GO_Central"/>
</dbReference>
<dbReference type="GO" id="GO:0005886">
    <property type="term" value="C:plasma membrane"/>
    <property type="evidence" value="ECO:0000266"/>
    <property type="project" value="RGD"/>
</dbReference>
<dbReference type="GO" id="GO:0019956">
    <property type="term" value="F:chemokine binding"/>
    <property type="evidence" value="ECO:0000266"/>
    <property type="project" value="RGD"/>
</dbReference>
<dbReference type="InterPro" id="IPR008253">
    <property type="entry name" value="Marvel"/>
</dbReference>
<dbReference type="InterPro" id="IPR050578">
    <property type="entry name" value="MARVEL-CKLF_proteins"/>
</dbReference>
<dbReference type="PANTHER" id="PTHR22776">
    <property type="entry name" value="MARVEL-CONTAINING POTENTIAL LIPID RAFT-ASSOCIATED PROTEIN"/>
    <property type="match status" value="1"/>
</dbReference>
<dbReference type="PANTHER" id="PTHR22776:SF4">
    <property type="entry name" value="PROTEOLIPID PROTEIN 2"/>
    <property type="match status" value="1"/>
</dbReference>
<dbReference type="Pfam" id="PF01284">
    <property type="entry name" value="MARVEL"/>
    <property type="match status" value="1"/>
</dbReference>
<dbReference type="PROSITE" id="PS51225">
    <property type="entry name" value="MARVEL"/>
    <property type="match status" value="1"/>
</dbReference>
<sequence>MADSERLSAPGCWLACTSFSRTKKGILLFAEIILCLVILICFSASTSAYSSLSVIEMIFAAVLFVFYMCDLHSKISFINWPWTDFFRSLIAAILYLITSIVVLVEGRGSSKIVAGVLGLLATLLFGYDAYITFPLKQQRHTAAPTDPTDGP</sequence>
<comment type="function">
    <text evidence="1">May play a role in cell differentiation in the intestinal epithelium.</text>
</comment>
<comment type="subcellular location">
    <subcellularLocation>
        <location evidence="1">Membrane</location>
        <topology evidence="1">Multi-pass membrane protein</topology>
    </subcellularLocation>
</comment>
<gene>
    <name type="primary">Plp2</name>
</gene>
<keyword id="KW-0472">Membrane</keyword>
<keyword id="KW-1185">Reference proteome</keyword>
<keyword id="KW-0812">Transmembrane</keyword>
<keyword id="KW-1133">Transmembrane helix</keyword>